<feature type="chain" id="PRO_0000059876" description="Ig heavy chain V region M511">
    <location>
        <begin position="1"/>
        <end position="122" status="greater than"/>
    </location>
</feature>
<feature type="domain" description="Ig-like">
    <location>
        <begin position="1"/>
        <end position="114"/>
    </location>
</feature>
<feature type="non-terminal residue">
    <location>
        <position position="122"/>
    </location>
</feature>
<accession>P01790</accession>
<proteinExistence type="evidence at protein level"/>
<keyword id="KW-1064">Adaptive immunity</keyword>
<keyword id="KW-0903">Direct protein sequencing</keyword>
<keyword id="KW-0391">Immunity</keyword>
<keyword id="KW-1280">Immunoglobulin</keyword>
<keyword id="KW-1185">Reference proteome</keyword>
<name>HVM21_MOUSE</name>
<dbReference type="PIR" id="A30539">
    <property type="entry name" value="A30539"/>
</dbReference>
<dbReference type="PIR" id="A30556">
    <property type="entry name" value="A30556"/>
</dbReference>
<dbReference type="PIR" id="B30540">
    <property type="entry name" value="B30540"/>
</dbReference>
<dbReference type="PIR" id="B30556">
    <property type="entry name" value="B30556"/>
</dbReference>
<dbReference type="PIR" id="B93857">
    <property type="entry name" value="AVMS51"/>
</dbReference>
<dbReference type="PIR" id="D30556">
    <property type="entry name" value="D30556"/>
</dbReference>
<dbReference type="PIR" id="E30539">
    <property type="entry name" value="E30539"/>
</dbReference>
<dbReference type="PIR" id="F30539">
    <property type="entry name" value="F30539"/>
</dbReference>
<dbReference type="PIR" id="G30539">
    <property type="entry name" value="G30539"/>
</dbReference>
<dbReference type="PIR" id="H30539">
    <property type="entry name" value="H30539"/>
</dbReference>
<dbReference type="PIR" id="I30538">
    <property type="entry name" value="I30538"/>
</dbReference>
<dbReference type="PIR" id="PL0017">
    <property type="entry name" value="PL0017"/>
</dbReference>
<dbReference type="PIR" id="PT0353">
    <property type="entry name" value="PT0353"/>
</dbReference>
<dbReference type="PIR" id="PT0354">
    <property type="entry name" value="PT0354"/>
</dbReference>
<dbReference type="SMR" id="P01790"/>
<dbReference type="FunCoup" id="P01790">
    <property type="interactions" value="554"/>
</dbReference>
<dbReference type="InParanoid" id="P01790"/>
<dbReference type="Proteomes" id="UP000000589">
    <property type="component" value="Unplaced"/>
</dbReference>
<dbReference type="RNAct" id="P01790">
    <property type="molecule type" value="protein"/>
</dbReference>
<dbReference type="GO" id="GO:0005576">
    <property type="term" value="C:extracellular region"/>
    <property type="evidence" value="ECO:0007669"/>
    <property type="project" value="UniProtKB-ARBA"/>
</dbReference>
<dbReference type="GO" id="GO:0019814">
    <property type="term" value="C:immunoglobulin complex"/>
    <property type="evidence" value="ECO:0007669"/>
    <property type="project" value="UniProtKB-KW"/>
</dbReference>
<dbReference type="GO" id="GO:0003823">
    <property type="term" value="F:antigen binding"/>
    <property type="evidence" value="ECO:0000318"/>
    <property type="project" value="GO_Central"/>
</dbReference>
<dbReference type="GO" id="GO:0016064">
    <property type="term" value="P:immunoglobulin mediated immune response"/>
    <property type="evidence" value="ECO:0000318"/>
    <property type="project" value="GO_Central"/>
</dbReference>
<dbReference type="FunFam" id="2.60.40.10:FF:001372">
    <property type="entry name" value="Ig heavy chain V region M603"/>
    <property type="match status" value="1"/>
</dbReference>
<dbReference type="Gene3D" id="2.60.40.10">
    <property type="entry name" value="Immunoglobulins"/>
    <property type="match status" value="1"/>
</dbReference>
<dbReference type="InterPro" id="IPR007110">
    <property type="entry name" value="Ig-like_dom"/>
</dbReference>
<dbReference type="InterPro" id="IPR036179">
    <property type="entry name" value="Ig-like_dom_sf"/>
</dbReference>
<dbReference type="InterPro" id="IPR013783">
    <property type="entry name" value="Ig-like_fold"/>
</dbReference>
<dbReference type="InterPro" id="IPR003599">
    <property type="entry name" value="Ig_sub"/>
</dbReference>
<dbReference type="InterPro" id="IPR013106">
    <property type="entry name" value="Ig_V-set"/>
</dbReference>
<dbReference type="InterPro" id="IPR050199">
    <property type="entry name" value="IgHV"/>
</dbReference>
<dbReference type="PANTHER" id="PTHR23266">
    <property type="entry name" value="IMMUNOGLOBULIN HEAVY CHAIN"/>
    <property type="match status" value="1"/>
</dbReference>
<dbReference type="Pfam" id="PF07686">
    <property type="entry name" value="V-set"/>
    <property type="match status" value="1"/>
</dbReference>
<dbReference type="SMART" id="SM00409">
    <property type="entry name" value="IG"/>
    <property type="match status" value="1"/>
</dbReference>
<dbReference type="SMART" id="SM00406">
    <property type="entry name" value="IGv"/>
    <property type="match status" value="1"/>
</dbReference>
<dbReference type="SUPFAM" id="SSF48726">
    <property type="entry name" value="Immunoglobulin"/>
    <property type="match status" value="1"/>
</dbReference>
<dbReference type="PROSITE" id="PS50835">
    <property type="entry name" value="IG_LIKE"/>
    <property type="match status" value="1"/>
</dbReference>
<organism>
    <name type="scientific">Mus musculus</name>
    <name type="common">Mouse</name>
    <dbReference type="NCBI Taxonomy" id="10090"/>
    <lineage>
        <taxon>Eukaryota</taxon>
        <taxon>Metazoa</taxon>
        <taxon>Chordata</taxon>
        <taxon>Craniata</taxon>
        <taxon>Vertebrata</taxon>
        <taxon>Euteleostomi</taxon>
        <taxon>Mammalia</taxon>
        <taxon>Eutheria</taxon>
        <taxon>Euarchontoglires</taxon>
        <taxon>Glires</taxon>
        <taxon>Rodentia</taxon>
        <taxon>Myomorpha</taxon>
        <taxon>Muroidea</taxon>
        <taxon>Muridae</taxon>
        <taxon>Murinae</taxon>
        <taxon>Mus</taxon>
        <taxon>Mus</taxon>
    </lineage>
</organism>
<comment type="miscellaneous">
    <text>This chain was isolated from a myeloma protein that binds phosphorylcholine.</text>
</comment>
<protein>
    <recommendedName>
        <fullName>Ig heavy chain V region M511</fullName>
    </recommendedName>
</protein>
<sequence>EVKLVESGGGLVQPGGSLRLSCATSGFTFSDFYMEWVRQSPGKRLEWIAASRNKANDYTTEYSASVKGRFIVSRDTSQSILYLQMNALRAEDTAIYYCARYYGSSYWYFDVWGAGTTVTVSS</sequence>
<reference key="1">
    <citation type="journal article" date="1980" name="Proc. Natl. Acad. Sci. U.S.A.">
        <title>Complete amino acid sequence of a mouse immunoglobulin alpha chain (MOPC 511).</title>
        <authorList>
            <person name="Robinson E.A."/>
            <person name="Appella E."/>
        </authorList>
    </citation>
    <scope>PROTEIN SEQUENCE</scope>
</reference>